<feature type="chain" id="PRO_0000118187" description="NAD(P)H-quinone oxidoreductase subunit 5, chloroplastic">
    <location>
        <begin position="1"/>
        <end position="742"/>
    </location>
</feature>
<feature type="transmembrane region" description="Helical" evidence="2">
    <location>
        <begin position="9"/>
        <end position="29"/>
    </location>
</feature>
<feature type="transmembrane region" description="Helical" evidence="2">
    <location>
        <begin position="40"/>
        <end position="60"/>
    </location>
</feature>
<feature type="transmembrane region" description="Helical" evidence="2">
    <location>
        <begin position="89"/>
        <end position="109"/>
    </location>
</feature>
<feature type="transmembrane region" description="Helical" evidence="2">
    <location>
        <begin position="125"/>
        <end position="145"/>
    </location>
</feature>
<feature type="transmembrane region" description="Helical" evidence="2">
    <location>
        <begin position="147"/>
        <end position="167"/>
    </location>
</feature>
<feature type="transmembrane region" description="Helical" evidence="2">
    <location>
        <begin position="185"/>
        <end position="205"/>
    </location>
</feature>
<feature type="transmembrane region" description="Helical" evidence="2">
    <location>
        <begin position="219"/>
        <end position="239"/>
    </location>
</feature>
<feature type="transmembrane region" description="Helical" evidence="2">
    <location>
        <begin position="258"/>
        <end position="278"/>
    </location>
</feature>
<feature type="transmembrane region" description="Helical" evidence="2">
    <location>
        <begin position="283"/>
        <end position="303"/>
    </location>
</feature>
<feature type="transmembrane region" description="Helical" evidence="2">
    <location>
        <begin position="327"/>
        <end position="347"/>
    </location>
</feature>
<feature type="transmembrane region" description="Helical" evidence="2">
    <location>
        <begin position="354"/>
        <end position="374"/>
    </location>
</feature>
<feature type="transmembrane region" description="Helical" evidence="2">
    <location>
        <begin position="396"/>
        <end position="416"/>
    </location>
</feature>
<feature type="transmembrane region" description="Helical" evidence="2">
    <location>
        <begin position="425"/>
        <end position="445"/>
    </location>
</feature>
<feature type="transmembrane region" description="Helical" evidence="2">
    <location>
        <begin position="550"/>
        <end position="570"/>
    </location>
</feature>
<feature type="transmembrane region" description="Helical" evidence="2">
    <location>
        <begin position="606"/>
        <end position="626"/>
    </location>
</feature>
<feature type="transmembrane region" description="Helical" evidence="2">
    <location>
        <begin position="722"/>
        <end position="742"/>
    </location>
</feature>
<feature type="sequence conflict" description="In Ref. 1; AAC37456." evidence="3" ref="1">
    <original>T</original>
    <variation>S</variation>
    <location>
        <position position="438"/>
    </location>
</feature>
<feature type="sequence conflict" description="In Ref. 1; AAC37456." evidence="3" ref="1">
    <location>
        <position position="511"/>
    </location>
</feature>
<feature type="sequence conflict" description="In Ref. 1; AAC37456." evidence="3" ref="1">
    <location>
        <begin position="630"/>
        <end position="632"/>
    </location>
</feature>
<feature type="sequence conflict" description="In Ref. 1; AAC37456." evidence="3" ref="1">
    <original>D</original>
    <variation>H</variation>
    <location>
        <position position="650"/>
    </location>
</feature>
<feature type="sequence conflict" description="In Ref. 1; AAC37456." evidence="3" ref="1">
    <original>NS</original>
    <variation>KF</variation>
    <location>
        <begin position="654"/>
        <end position="655"/>
    </location>
</feature>
<evidence type="ECO:0000250" key="1"/>
<evidence type="ECO:0000255" key="2"/>
<evidence type="ECO:0000305" key="3"/>
<organism>
    <name type="scientific">Lactuca sativa</name>
    <name type="common">Garden lettuce</name>
    <dbReference type="NCBI Taxonomy" id="4236"/>
    <lineage>
        <taxon>Eukaryota</taxon>
        <taxon>Viridiplantae</taxon>
        <taxon>Streptophyta</taxon>
        <taxon>Embryophyta</taxon>
        <taxon>Tracheophyta</taxon>
        <taxon>Spermatophyta</taxon>
        <taxon>Magnoliopsida</taxon>
        <taxon>eudicotyledons</taxon>
        <taxon>Gunneridae</taxon>
        <taxon>Pentapetalae</taxon>
        <taxon>asterids</taxon>
        <taxon>campanulids</taxon>
        <taxon>Asterales</taxon>
        <taxon>Asteraceae</taxon>
        <taxon>Cichorioideae</taxon>
        <taxon>Cichorieae</taxon>
        <taxon>Lactucinae</taxon>
        <taxon>Lactuca</taxon>
    </lineage>
</organism>
<keyword id="KW-0150">Chloroplast</keyword>
<keyword id="KW-0472">Membrane</keyword>
<keyword id="KW-0520">NAD</keyword>
<keyword id="KW-0521">NADP</keyword>
<keyword id="KW-0934">Plastid</keyword>
<keyword id="KW-0618">Plastoquinone</keyword>
<keyword id="KW-0874">Quinone</keyword>
<keyword id="KW-0793">Thylakoid</keyword>
<keyword id="KW-1278">Translocase</keyword>
<keyword id="KW-0812">Transmembrane</keyword>
<keyword id="KW-1133">Transmembrane helix</keyword>
<keyword id="KW-0813">Transport</keyword>
<reference key="1">
    <citation type="journal article" date="1995" name="Proc. Natl. Acad. Sci. U.S.A.">
        <title>ndhF sequence evolution and the major clades in the sunflower family.</title>
        <authorList>
            <person name="Kim K.-J."/>
            <person name="Jansen R.K."/>
        </authorList>
    </citation>
    <scope>NUCLEOTIDE SEQUENCE [GENOMIC DNA]</scope>
</reference>
<reference key="2">
    <citation type="journal article" date="2006" name="Transgenic Res.">
        <title>Efficient and stable transformation of Lactuca sativa L. cv. Cisco (lettuce) plastids.</title>
        <authorList>
            <person name="Kanamoto H."/>
            <person name="Yamashita A."/>
            <person name="Asao H."/>
            <person name="Okumura S."/>
            <person name="Takase H."/>
            <person name="Hattori M."/>
            <person name="Yokota A."/>
            <person name="Tomizawa K."/>
        </authorList>
    </citation>
    <scope>NUCLEOTIDE SEQUENCE [LARGE SCALE GENOMIC DNA]</scope>
    <source>
        <strain>cv. Cisco</strain>
    </source>
</reference>
<reference key="3">
    <citation type="submission" date="2006-01" db="EMBL/GenBank/DDBJ databases">
        <title>A comparison of the first two published chloroplast genomes in Asteraceae: Lactuca and Helianthus.</title>
        <authorList>
            <person name="Timme R.E."/>
            <person name="Kuehl J.V."/>
            <person name="Boore J.L."/>
            <person name="Jansen R.K."/>
        </authorList>
    </citation>
    <scope>NUCLEOTIDE SEQUENCE [LARGE SCALE GENOMIC DNA]</scope>
    <source>
        <strain>cv. Salinas</strain>
    </source>
</reference>
<comment type="function">
    <text evidence="1">NDH shuttles electrons from NAD(P)H:plastoquinone, via FMN and iron-sulfur (Fe-S) centers, to quinones in the photosynthetic chain and possibly in a chloroplast respiratory chain. The immediate electron acceptor for the enzyme in this species is believed to be plastoquinone. Couples the redox reaction to proton translocation, and thus conserves the redox energy in a proton gradient (By similarity).</text>
</comment>
<comment type="catalytic activity">
    <reaction>
        <text>a plastoquinone + NADH + (n+1) H(+)(in) = a plastoquinol + NAD(+) + n H(+)(out)</text>
        <dbReference type="Rhea" id="RHEA:42608"/>
        <dbReference type="Rhea" id="RHEA-COMP:9561"/>
        <dbReference type="Rhea" id="RHEA-COMP:9562"/>
        <dbReference type="ChEBI" id="CHEBI:15378"/>
        <dbReference type="ChEBI" id="CHEBI:17757"/>
        <dbReference type="ChEBI" id="CHEBI:57540"/>
        <dbReference type="ChEBI" id="CHEBI:57945"/>
        <dbReference type="ChEBI" id="CHEBI:62192"/>
    </reaction>
</comment>
<comment type="catalytic activity">
    <reaction>
        <text>a plastoquinone + NADPH + (n+1) H(+)(in) = a plastoquinol + NADP(+) + n H(+)(out)</text>
        <dbReference type="Rhea" id="RHEA:42612"/>
        <dbReference type="Rhea" id="RHEA-COMP:9561"/>
        <dbReference type="Rhea" id="RHEA-COMP:9562"/>
        <dbReference type="ChEBI" id="CHEBI:15378"/>
        <dbReference type="ChEBI" id="CHEBI:17757"/>
        <dbReference type="ChEBI" id="CHEBI:57783"/>
        <dbReference type="ChEBI" id="CHEBI:58349"/>
        <dbReference type="ChEBI" id="CHEBI:62192"/>
    </reaction>
</comment>
<comment type="subunit">
    <text evidence="1">NDH is composed of at least 16 different subunits, 5 of which are encoded in the nucleus.</text>
</comment>
<comment type="subcellular location">
    <subcellularLocation>
        <location evidence="1">Plastid</location>
        <location evidence="1">Chloroplast thylakoid membrane</location>
        <topology evidence="1">Multi-pass membrane protein</topology>
    </subcellularLocation>
</comment>
<comment type="similarity">
    <text evidence="3">Belongs to the complex I subunit 5 family.</text>
</comment>
<proteinExistence type="inferred from homology"/>
<sequence length="742" mass="84540">MEQTYQYAWIIPFLPLPVPMLIGLGLLLFPTATKSLRRMWSFQSVLLLSIVMIFSMNLSIQQINSSYVYQYVWSWIINNDFSLEFGYLIDPLTSIMLILITTVGIMVLIYSDNYMSHDHGYLRFFAYMSFFSTSMLGLVTSSNLIQIYIFWELVGICSYLLIGFWFTRPVAAKACQKAFVTNRVGDFGLLLGILGFYWITGSFEFRDLFQIFNNLISNNEVNFLFVTLCAILLFAGAIAKSAQFPLHVWLPDAMEGPTPISALIHAATMVAAGIFLVARLMPLFIVIPHIMNFISLIGIITVFLGATLALAQKDIKRGLAYSTMSQLGYMMLALGMGSYRSALFHLITHAYSKALLFLGSGSVIHSMETLVGYCPKKSQNMVLMGGLTKHLPITKNSFLLGTLSLCGIPPLACFWSKDEILNDSWLYSPIFGIIAWSTAGLTAFYMCRIYLLTFEGHLNVHFQNYSGKRNTPFYSISLWGKEGSKISNKNFSLVTLLKMKKNPRPSFFSNNKVYKIDENVRNMIQPFLSIPHFGNTKTYSYPYESDNTMLFPILILILFTLFVGFLGIPFNQDVDILSKWLNPSINLLHQNSNNSIDWYEFSKDAFFSVSIASFGIFIAFFLYKPVYSSFQNLEFLNTFVKMGPNRIFYDKIKNSIYDWSYNRGYIDAFYGRFLTAGIRKLANFAHFFDRRIIDAIPNGVGLMSFFGAEVIKSVGGGRISSYLFFYFSYVAIFLLIYYFFNV</sequence>
<dbReference type="EC" id="7.1.1.-"/>
<dbReference type="EMBL" id="L39389">
    <property type="protein sequence ID" value="AAC37456.1"/>
    <property type="molecule type" value="Genomic_DNA"/>
</dbReference>
<dbReference type="EMBL" id="AP007232">
    <property type="protein sequence ID" value="BAE47642.1"/>
    <property type="molecule type" value="Genomic_DNA"/>
</dbReference>
<dbReference type="EMBL" id="DQ383816">
    <property type="protein sequence ID" value="ABD47291.1"/>
    <property type="molecule type" value="Genomic_DNA"/>
</dbReference>
<dbReference type="PIR" id="T13396">
    <property type="entry name" value="T13396"/>
</dbReference>
<dbReference type="RefSeq" id="YP_398375.1">
    <property type="nucleotide sequence ID" value="NC_007578.1"/>
</dbReference>
<dbReference type="SMR" id="Q32539"/>
<dbReference type="GeneID" id="3772856"/>
<dbReference type="KEGG" id="lsv:3772856"/>
<dbReference type="OrthoDB" id="543408at2759"/>
<dbReference type="GO" id="GO:0009535">
    <property type="term" value="C:chloroplast thylakoid membrane"/>
    <property type="evidence" value="ECO:0007669"/>
    <property type="project" value="UniProtKB-SubCell"/>
</dbReference>
<dbReference type="GO" id="GO:0008137">
    <property type="term" value="F:NADH dehydrogenase (ubiquinone) activity"/>
    <property type="evidence" value="ECO:0007669"/>
    <property type="project" value="InterPro"/>
</dbReference>
<dbReference type="GO" id="GO:0048038">
    <property type="term" value="F:quinone binding"/>
    <property type="evidence" value="ECO:0007669"/>
    <property type="project" value="UniProtKB-KW"/>
</dbReference>
<dbReference type="GO" id="GO:0042773">
    <property type="term" value="P:ATP synthesis coupled electron transport"/>
    <property type="evidence" value="ECO:0007669"/>
    <property type="project" value="InterPro"/>
</dbReference>
<dbReference type="Gene3D" id="1.20.5.2700">
    <property type="match status" value="1"/>
</dbReference>
<dbReference type="InterPro" id="IPR002128">
    <property type="entry name" value="NADH_UbQ_OxRdtase_chlpt_su5_C"/>
</dbReference>
<dbReference type="InterPro" id="IPR018393">
    <property type="entry name" value="NADHpl_OxRdtase_5_subgr"/>
</dbReference>
<dbReference type="InterPro" id="IPR001750">
    <property type="entry name" value="ND/Mrp_TM"/>
</dbReference>
<dbReference type="InterPro" id="IPR003945">
    <property type="entry name" value="NU5C-like"/>
</dbReference>
<dbReference type="InterPro" id="IPR001516">
    <property type="entry name" value="Proton_antipo_N"/>
</dbReference>
<dbReference type="NCBIfam" id="TIGR01974">
    <property type="entry name" value="NDH_I_L"/>
    <property type="match status" value="1"/>
</dbReference>
<dbReference type="NCBIfam" id="NF005141">
    <property type="entry name" value="PRK06590.1"/>
    <property type="match status" value="1"/>
</dbReference>
<dbReference type="PANTHER" id="PTHR42829">
    <property type="entry name" value="NADH-UBIQUINONE OXIDOREDUCTASE CHAIN 5"/>
    <property type="match status" value="1"/>
</dbReference>
<dbReference type="PANTHER" id="PTHR42829:SF2">
    <property type="entry name" value="NADH-UBIQUINONE OXIDOREDUCTASE CHAIN 5"/>
    <property type="match status" value="1"/>
</dbReference>
<dbReference type="Pfam" id="PF01010">
    <property type="entry name" value="Proton_antipo_C"/>
    <property type="match status" value="1"/>
</dbReference>
<dbReference type="Pfam" id="PF00361">
    <property type="entry name" value="Proton_antipo_M"/>
    <property type="match status" value="1"/>
</dbReference>
<dbReference type="Pfam" id="PF00662">
    <property type="entry name" value="Proton_antipo_N"/>
    <property type="match status" value="1"/>
</dbReference>
<dbReference type="PRINTS" id="PR01434">
    <property type="entry name" value="NADHDHGNASE5"/>
</dbReference>
<dbReference type="PRINTS" id="PR01435">
    <property type="entry name" value="NPOXDRDTASE5"/>
</dbReference>
<gene>
    <name type="primary">ndhF</name>
</gene>
<accession>Q32539</accession>
<accession>Q1KXG3</accession>
<accession>Q332T0</accession>
<protein>
    <recommendedName>
        <fullName>NAD(P)H-quinone oxidoreductase subunit 5, chloroplastic</fullName>
        <ecNumber>7.1.1.-</ecNumber>
    </recommendedName>
    <alternativeName>
        <fullName>NAD(P)H dehydrogenase subunit 5</fullName>
    </alternativeName>
    <alternativeName>
        <fullName>NADH-plastoquinone oxidoreductase subunit 5</fullName>
    </alternativeName>
</protein>
<name>NU5C_LACSA</name>
<geneLocation type="chloroplast"/>